<sequence>MKAATLSEAGVSREILVIGSGFAAQQLVKSLRKLDAEQPIRLITADSGDEYNKPDLSHVVSRGCTAAAMTRLSGSDFAEQQRIALVPHCPVLGIDPARRIVMTVQGEFAYGQLVLATGASAARPDLPGSEQLVTLNSQQEYAAAEGPIQQARRILVLGAGLIGCELAMDMASDGREVTLVDLADSPLSALLPAVLSQPLQQALRSQGVSLQFGLGIARIDAQPGDGWRVTLTDGRTSEQDLVIAAIGLKPNLVLAQAAGLAVERGILVDDSLQTSAPHIFALGDCAQWRGQLLPFLQPIVLGANALARTLLGTPTPLTLPPMLVKVKTPRYPLQLAGRTKGEDLAWQCRWNSHGLVAEARAEDGELCGFVVGGDQMSAAFPLLRQLPR</sequence>
<organism>
    <name type="scientific">Aeromonas salmonicida (strain A449)</name>
    <dbReference type="NCBI Taxonomy" id="382245"/>
    <lineage>
        <taxon>Bacteria</taxon>
        <taxon>Pseudomonadati</taxon>
        <taxon>Pseudomonadota</taxon>
        <taxon>Gammaproteobacteria</taxon>
        <taxon>Aeromonadales</taxon>
        <taxon>Aeromonadaceae</taxon>
        <taxon>Aeromonas</taxon>
    </lineage>
</organism>
<dbReference type="EC" id="1.18.1.-" evidence="1"/>
<dbReference type="EMBL" id="CP000644">
    <property type="protein sequence ID" value="ABO92195.1"/>
    <property type="molecule type" value="Genomic_DNA"/>
</dbReference>
<dbReference type="RefSeq" id="WP_005320623.1">
    <property type="nucleotide sequence ID" value="NC_009348.1"/>
</dbReference>
<dbReference type="SMR" id="A4STH3"/>
<dbReference type="STRING" id="29491.GCA_000820065_02825"/>
<dbReference type="KEGG" id="asa:ASA_4271"/>
<dbReference type="eggNOG" id="COG0446">
    <property type="taxonomic scope" value="Bacteria"/>
</dbReference>
<dbReference type="HOGENOM" id="CLU_003291_4_4_6"/>
<dbReference type="UniPathway" id="UPA00638"/>
<dbReference type="Proteomes" id="UP000000225">
    <property type="component" value="Chromosome"/>
</dbReference>
<dbReference type="GO" id="GO:0005737">
    <property type="term" value="C:cytoplasm"/>
    <property type="evidence" value="ECO:0007669"/>
    <property type="project" value="UniProtKB-SubCell"/>
</dbReference>
<dbReference type="GO" id="GO:0016731">
    <property type="term" value="F:oxidoreductase activity, acting on iron-sulfur proteins as donors, NAD or NADP as acceptor"/>
    <property type="evidence" value="ECO:0007669"/>
    <property type="project" value="UniProtKB-UniRule"/>
</dbReference>
<dbReference type="Gene3D" id="3.30.390.120">
    <property type="match status" value="1"/>
</dbReference>
<dbReference type="Gene3D" id="3.50.50.60">
    <property type="entry name" value="FAD/NAD(P)-binding domain"/>
    <property type="match status" value="2"/>
</dbReference>
<dbReference type="HAMAP" id="MF_01313">
    <property type="entry name" value="NorW"/>
    <property type="match status" value="1"/>
</dbReference>
<dbReference type="InterPro" id="IPR050260">
    <property type="entry name" value="FAD-bd_OxRdtase"/>
</dbReference>
<dbReference type="InterPro" id="IPR036188">
    <property type="entry name" value="FAD/NAD-bd_sf"/>
</dbReference>
<dbReference type="InterPro" id="IPR023753">
    <property type="entry name" value="FAD/NAD-binding_dom"/>
</dbReference>
<dbReference type="InterPro" id="IPR023961">
    <property type="entry name" value="NO_rdtase_NorW"/>
</dbReference>
<dbReference type="InterPro" id="IPR041364">
    <property type="entry name" value="Rbx-bd"/>
</dbReference>
<dbReference type="NCBIfam" id="NF003437">
    <property type="entry name" value="PRK04965.1"/>
    <property type="match status" value="1"/>
</dbReference>
<dbReference type="PANTHER" id="PTHR43429:SF3">
    <property type="entry name" value="NITRITE REDUCTASE [NAD(P)H]"/>
    <property type="match status" value="1"/>
</dbReference>
<dbReference type="PANTHER" id="PTHR43429">
    <property type="entry name" value="PYRIDINE NUCLEOTIDE-DISULFIDE OXIDOREDUCTASE DOMAIN-CONTAINING"/>
    <property type="match status" value="1"/>
</dbReference>
<dbReference type="Pfam" id="PF07992">
    <property type="entry name" value="Pyr_redox_2"/>
    <property type="match status" value="1"/>
</dbReference>
<dbReference type="Pfam" id="PF18113">
    <property type="entry name" value="Rbx_binding"/>
    <property type="match status" value="1"/>
</dbReference>
<dbReference type="PRINTS" id="PR00368">
    <property type="entry name" value="FADPNR"/>
</dbReference>
<dbReference type="PRINTS" id="PR00411">
    <property type="entry name" value="PNDRDTASEI"/>
</dbReference>
<dbReference type="SUPFAM" id="SSF51905">
    <property type="entry name" value="FAD/NAD(P)-binding domain"/>
    <property type="match status" value="1"/>
</dbReference>
<name>NORW_AERS4</name>
<feature type="chain" id="PRO_0000305604" description="Nitric oxide reductase FlRd-NAD(+) reductase">
    <location>
        <begin position="1"/>
        <end position="388"/>
    </location>
</feature>
<keyword id="KW-0963">Cytoplasm</keyword>
<keyword id="KW-0274">FAD</keyword>
<keyword id="KW-0285">Flavoprotein</keyword>
<keyword id="KW-0520">NAD</keyword>
<keyword id="KW-0560">Oxidoreductase</keyword>
<gene>
    <name evidence="1" type="primary">norW</name>
    <name evidence="1" type="synonym">flrR</name>
    <name type="ordered locus">ASA_4271</name>
</gene>
<protein>
    <recommendedName>
        <fullName evidence="1">Nitric oxide reductase FlRd-NAD(+) reductase</fullName>
        <ecNumber evidence="1">1.18.1.-</ecNumber>
    </recommendedName>
    <alternativeName>
        <fullName evidence="1">Flavorubredoxin reductase</fullName>
        <shortName evidence="1">FlRd-reductase</shortName>
        <shortName evidence="1">FlavoRb reductase</shortName>
    </alternativeName>
</protein>
<reference key="1">
    <citation type="journal article" date="2008" name="BMC Genomics">
        <title>The genome of Aeromonas salmonicida subsp. salmonicida A449: insights into the evolution of a fish pathogen.</title>
        <authorList>
            <person name="Reith M.E."/>
            <person name="Singh R.K."/>
            <person name="Curtis B."/>
            <person name="Boyd J.M."/>
            <person name="Bouevitch A."/>
            <person name="Kimball J."/>
            <person name="Munholland J."/>
            <person name="Murphy C."/>
            <person name="Sarty D."/>
            <person name="Williams J."/>
            <person name="Nash J.H."/>
            <person name="Johnson S.C."/>
            <person name="Brown L.L."/>
        </authorList>
    </citation>
    <scope>NUCLEOTIDE SEQUENCE [LARGE SCALE GENOMIC DNA]</scope>
    <source>
        <strain>A449</strain>
    </source>
</reference>
<proteinExistence type="inferred from homology"/>
<accession>A4STH3</accession>
<evidence type="ECO:0000255" key="1">
    <source>
        <dbReference type="HAMAP-Rule" id="MF_01313"/>
    </source>
</evidence>
<comment type="function">
    <text evidence="1">One of at least two accessory proteins for anaerobic nitric oxide (NO) reductase. Reduces the rubredoxin moiety of NO reductase.</text>
</comment>
<comment type="catalytic activity">
    <reaction evidence="1">
        <text>2 reduced [nitric oxide reductase rubredoxin domain] + NAD(+) + H(+) = 2 oxidized [nitric oxide reductase rubredoxin domain] + NADH</text>
        <dbReference type="Rhea" id="RHEA:42960"/>
        <dbReference type="Rhea" id="RHEA-COMP:10304"/>
        <dbReference type="Rhea" id="RHEA-COMP:10305"/>
        <dbReference type="ChEBI" id="CHEBI:15378"/>
        <dbReference type="ChEBI" id="CHEBI:29033"/>
        <dbReference type="ChEBI" id="CHEBI:29034"/>
        <dbReference type="ChEBI" id="CHEBI:57540"/>
        <dbReference type="ChEBI" id="CHEBI:57945"/>
    </reaction>
</comment>
<comment type="cofactor">
    <cofactor evidence="1">
        <name>FAD</name>
        <dbReference type="ChEBI" id="CHEBI:57692"/>
    </cofactor>
</comment>
<comment type="pathway">
    <text evidence="1">Nitrogen metabolism; nitric oxide reduction.</text>
</comment>
<comment type="subcellular location">
    <subcellularLocation>
        <location evidence="1">Cytoplasm</location>
    </subcellularLocation>
</comment>
<comment type="similarity">
    <text evidence="1">Belongs to the FAD-dependent oxidoreductase family.</text>
</comment>